<name>KHSE_STAAE</name>
<dbReference type="EC" id="2.7.1.39" evidence="1"/>
<dbReference type="EMBL" id="AP009351">
    <property type="protein sequence ID" value="BAF67514.1"/>
    <property type="molecule type" value="Genomic_DNA"/>
</dbReference>
<dbReference type="RefSeq" id="WP_000073184.1">
    <property type="nucleotide sequence ID" value="NZ_JBBIAE010000001.1"/>
</dbReference>
<dbReference type="SMR" id="A6QGN2"/>
<dbReference type="KEGG" id="sae:NWMN_1242"/>
<dbReference type="HOGENOM" id="CLU_041243_0_0_9"/>
<dbReference type="UniPathway" id="UPA00050">
    <property type="reaction ID" value="UER00064"/>
</dbReference>
<dbReference type="Proteomes" id="UP000006386">
    <property type="component" value="Chromosome"/>
</dbReference>
<dbReference type="GO" id="GO:0005737">
    <property type="term" value="C:cytoplasm"/>
    <property type="evidence" value="ECO:0007669"/>
    <property type="project" value="UniProtKB-SubCell"/>
</dbReference>
<dbReference type="GO" id="GO:0005524">
    <property type="term" value="F:ATP binding"/>
    <property type="evidence" value="ECO:0007669"/>
    <property type="project" value="UniProtKB-UniRule"/>
</dbReference>
<dbReference type="GO" id="GO:0004413">
    <property type="term" value="F:homoserine kinase activity"/>
    <property type="evidence" value="ECO:0007669"/>
    <property type="project" value="UniProtKB-UniRule"/>
</dbReference>
<dbReference type="GO" id="GO:0009088">
    <property type="term" value="P:threonine biosynthetic process"/>
    <property type="evidence" value="ECO:0007669"/>
    <property type="project" value="UniProtKB-UniRule"/>
</dbReference>
<dbReference type="Gene3D" id="3.30.230.10">
    <property type="match status" value="1"/>
</dbReference>
<dbReference type="Gene3D" id="3.30.70.890">
    <property type="entry name" value="GHMP kinase, C-terminal domain"/>
    <property type="match status" value="1"/>
</dbReference>
<dbReference type="HAMAP" id="MF_00384">
    <property type="entry name" value="Homoser_kinase"/>
    <property type="match status" value="1"/>
</dbReference>
<dbReference type="InterPro" id="IPR013750">
    <property type="entry name" value="GHMP_kinase_C_dom"/>
</dbReference>
<dbReference type="InterPro" id="IPR036554">
    <property type="entry name" value="GHMP_kinase_C_sf"/>
</dbReference>
<dbReference type="InterPro" id="IPR006204">
    <property type="entry name" value="GHMP_kinase_N_dom"/>
</dbReference>
<dbReference type="InterPro" id="IPR006203">
    <property type="entry name" value="GHMP_knse_ATP-bd_CS"/>
</dbReference>
<dbReference type="InterPro" id="IPR000870">
    <property type="entry name" value="Homoserine_kinase"/>
</dbReference>
<dbReference type="InterPro" id="IPR020568">
    <property type="entry name" value="Ribosomal_Su5_D2-typ_SF"/>
</dbReference>
<dbReference type="InterPro" id="IPR014721">
    <property type="entry name" value="Ribsml_uS5_D2-typ_fold_subgr"/>
</dbReference>
<dbReference type="NCBIfam" id="TIGR00191">
    <property type="entry name" value="thrB"/>
    <property type="match status" value="1"/>
</dbReference>
<dbReference type="PANTHER" id="PTHR20861:SF1">
    <property type="entry name" value="HOMOSERINE KINASE"/>
    <property type="match status" value="1"/>
</dbReference>
<dbReference type="PANTHER" id="PTHR20861">
    <property type="entry name" value="HOMOSERINE/4-DIPHOSPHOCYTIDYL-2-C-METHYL-D-ERYTHRITOL KINASE"/>
    <property type="match status" value="1"/>
</dbReference>
<dbReference type="Pfam" id="PF08544">
    <property type="entry name" value="GHMP_kinases_C"/>
    <property type="match status" value="1"/>
</dbReference>
<dbReference type="Pfam" id="PF00288">
    <property type="entry name" value="GHMP_kinases_N"/>
    <property type="match status" value="1"/>
</dbReference>
<dbReference type="PIRSF" id="PIRSF000676">
    <property type="entry name" value="Homoser_kin"/>
    <property type="match status" value="1"/>
</dbReference>
<dbReference type="PRINTS" id="PR00958">
    <property type="entry name" value="HOMSERKINASE"/>
</dbReference>
<dbReference type="SUPFAM" id="SSF55060">
    <property type="entry name" value="GHMP Kinase, C-terminal domain"/>
    <property type="match status" value="1"/>
</dbReference>
<dbReference type="SUPFAM" id="SSF54211">
    <property type="entry name" value="Ribosomal protein S5 domain 2-like"/>
    <property type="match status" value="1"/>
</dbReference>
<dbReference type="PROSITE" id="PS00627">
    <property type="entry name" value="GHMP_KINASES_ATP"/>
    <property type="match status" value="1"/>
</dbReference>
<evidence type="ECO:0000255" key="1">
    <source>
        <dbReference type="HAMAP-Rule" id="MF_00384"/>
    </source>
</evidence>
<sequence length="304" mass="33267">MSNVLELTIPASTANLGVGFDSIGMALDKFLHLSVKETSGTKWEYIFHDDASKQLPTDETNFIYHVAQQVASKYSVDLPNLCIEMRSDIPLARGLGSSASALVGAIYIANYFGDIQLSKHEVLQLATEIEGHPDNVAPTIYGGLIAGYYNDVSKETSVAHIDIPDVDVIVTIPTYELKTEASRRALPQKLTHSEAVKSSAISNTMICALAQHNYELAGKLMQQDGFHEPYRQHLIAEFDEVKTIASQHNAYATVISGAGPTILIFSRKENSGELVRSLNSQVVSCHSELVDINISGVKERIVYQ</sequence>
<proteinExistence type="inferred from homology"/>
<comment type="function">
    <text evidence="1">Catalyzes the ATP-dependent phosphorylation of L-homoserine to L-homoserine phosphate.</text>
</comment>
<comment type="catalytic activity">
    <reaction evidence="1">
        <text>L-homoserine + ATP = O-phospho-L-homoserine + ADP + H(+)</text>
        <dbReference type="Rhea" id="RHEA:13985"/>
        <dbReference type="ChEBI" id="CHEBI:15378"/>
        <dbReference type="ChEBI" id="CHEBI:30616"/>
        <dbReference type="ChEBI" id="CHEBI:57476"/>
        <dbReference type="ChEBI" id="CHEBI:57590"/>
        <dbReference type="ChEBI" id="CHEBI:456216"/>
        <dbReference type="EC" id="2.7.1.39"/>
    </reaction>
</comment>
<comment type="pathway">
    <text evidence="1">Amino-acid biosynthesis; L-threonine biosynthesis; L-threonine from L-aspartate: step 4/5.</text>
</comment>
<comment type="subcellular location">
    <subcellularLocation>
        <location evidence="1">Cytoplasm</location>
    </subcellularLocation>
</comment>
<comment type="similarity">
    <text evidence="1">Belongs to the GHMP kinase family. Homoserine kinase subfamily.</text>
</comment>
<protein>
    <recommendedName>
        <fullName evidence="1">Homoserine kinase</fullName>
        <shortName evidence="1">HK</shortName>
        <shortName evidence="1">HSK</shortName>
        <ecNumber evidence="1">2.7.1.39</ecNumber>
    </recommendedName>
</protein>
<accession>A6QGN2</accession>
<feature type="chain" id="PRO_1000072189" description="Homoserine kinase">
    <location>
        <begin position="1"/>
        <end position="304"/>
    </location>
</feature>
<feature type="binding site" evidence="1">
    <location>
        <begin position="90"/>
        <end position="100"/>
    </location>
    <ligand>
        <name>ATP</name>
        <dbReference type="ChEBI" id="CHEBI:30616"/>
    </ligand>
</feature>
<reference key="1">
    <citation type="journal article" date="2008" name="J. Bacteriol.">
        <title>Genome sequence of Staphylococcus aureus strain Newman and comparative analysis of staphylococcal genomes: polymorphism and evolution of two major pathogenicity islands.</title>
        <authorList>
            <person name="Baba T."/>
            <person name="Bae T."/>
            <person name="Schneewind O."/>
            <person name="Takeuchi F."/>
            <person name="Hiramatsu K."/>
        </authorList>
    </citation>
    <scope>NUCLEOTIDE SEQUENCE [LARGE SCALE GENOMIC DNA]</scope>
    <source>
        <strain>Newman</strain>
    </source>
</reference>
<keyword id="KW-0028">Amino-acid biosynthesis</keyword>
<keyword id="KW-0067">ATP-binding</keyword>
<keyword id="KW-0963">Cytoplasm</keyword>
<keyword id="KW-0418">Kinase</keyword>
<keyword id="KW-0547">Nucleotide-binding</keyword>
<keyword id="KW-0791">Threonine biosynthesis</keyword>
<keyword id="KW-0808">Transferase</keyword>
<organism>
    <name type="scientific">Staphylococcus aureus (strain Newman)</name>
    <dbReference type="NCBI Taxonomy" id="426430"/>
    <lineage>
        <taxon>Bacteria</taxon>
        <taxon>Bacillati</taxon>
        <taxon>Bacillota</taxon>
        <taxon>Bacilli</taxon>
        <taxon>Bacillales</taxon>
        <taxon>Staphylococcaceae</taxon>
        <taxon>Staphylococcus</taxon>
    </lineage>
</organism>
<gene>
    <name evidence="1" type="primary">thrB</name>
    <name type="ordered locus">NWMN_1242</name>
</gene>